<gene>
    <name evidence="1" type="primary">rplE</name>
    <name type="ordered locus">Sden_0182</name>
</gene>
<keyword id="KW-1185">Reference proteome</keyword>
<keyword id="KW-0687">Ribonucleoprotein</keyword>
<keyword id="KW-0689">Ribosomal protein</keyword>
<keyword id="KW-0694">RNA-binding</keyword>
<keyword id="KW-0699">rRNA-binding</keyword>
<keyword id="KW-0820">tRNA-binding</keyword>
<reference key="1">
    <citation type="submission" date="2006-03" db="EMBL/GenBank/DDBJ databases">
        <title>Complete sequence of Shewanella denitrificans OS217.</title>
        <authorList>
            <consortium name="US DOE Joint Genome Institute"/>
            <person name="Copeland A."/>
            <person name="Lucas S."/>
            <person name="Lapidus A."/>
            <person name="Barry K."/>
            <person name="Detter J.C."/>
            <person name="Glavina del Rio T."/>
            <person name="Hammon N."/>
            <person name="Israni S."/>
            <person name="Dalin E."/>
            <person name="Tice H."/>
            <person name="Pitluck S."/>
            <person name="Brettin T."/>
            <person name="Bruce D."/>
            <person name="Han C."/>
            <person name="Tapia R."/>
            <person name="Gilna P."/>
            <person name="Kiss H."/>
            <person name="Schmutz J."/>
            <person name="Larimer F."/>
            <person name="Land M."/>
            <person name="Hauser L."/>
            <person name="Kyrpides N."/>
            <person name="Lykidis A."/>
            <person name="Richardson P."/>
        </authorList>
    </citation>
    <scope>NUCLEOTIDE SEQUENCE [LARGE SCALE GENOMIC DNA]</scope>
    <source>
        <strain>OS217 / ATCC BAA-1090 / DSM 15013</strain>
    </source>
</reference>
<feature type="chain" id="PRO_1000052822" description="Large ribosomal subunit protein uL5">
    <location>
        <begin position="1"/>
        <end position="179"/>
    </location>
</feature>
<name>RL5_SHEDO</name>
<protein>
    <recommendedName>
        <fullName evidence="1">Large ribosomal subunit protein uL5</fullName>
    </recommendedName>
    <alternativeName>
        <fullName evidence="2">50S ribosomal protein L5</fullName>
    </alternativeName>
</protein>
<comment type="function">
    <text evidence="1">This is one of the proteins that bind and probably mediate the attachment of the 5S RNA into the large ribosomal subunit, where it forms part of the central protuberance. In the 70S ribosome it contacts protein S13 of the 30S subunit (bridge B1b), connecting the 2 subunits; this bridge is implicated in subunit movement. Contacts the P site tRNA; the 5S rRNA and some of its associated proteins might help stabilize positioning of ribosome-bound tRNAs.</text>
</comment>
<comment type="subunit">
    <text evidence="1">Part of the 50S ribosomal subunit; part of the 5S rRNA/L5/L18/L25 subcomplex. Contacts the 5S rRNA and the P site tRNA. Forms a bridge to the 30S subunit in the 70S ribosome.</text>
</comment>
<comment type="similarity">
    <text evidence="1">Belongs to the universal ribosomal protein uL5 family.</text>
</comment>
<accession>Q12SU7</accession>
<sequence>MAKLHDKYQETVVAELAKKFGYSSVMQVPRIEKITLNMGVGEAVADKKVMEHALRDMTAIAGQKPIVTVARKSVAGFKIREGYPIGCKVTLRGERMWEFLERLVDIAIPRIRDFRGLSAKAFDGRGNYAMGVREQIIFPEIDYDKIDKIRGMDIVITTSAKTDEEGHALLTAFNFPFKK</sequence>
<organism>
    <name type="scientific">Shewanella denitrificans (strain OS217 / ATCC BAA-1090 / DSM 15013)</name>
    <dbReference type="NCBI Taxonomy" id="318161"/>
    <lineage>
        <taxon>Bacteria</taxon>
        <taxon>Pseudomonadati</taxon>
        <taxon>Pseudomonadota</taxon>
        <taxon>Gammaproteobacteria</taxon>
        <taxon>Alteromonadales</taxon>
        <taxon>Shewanellaceae</taxon>
        <taxon>Shewanella</taxon>
    </lineage>
</organism>
<dbReference type="EMBL" id="CP000302">
    <property type="protein sequence ID" value="ABE53479.1"/>
    <property type="molecule type" value="Genomic_DNA"/>
</dbReference>
<dbReference type="RefSeq" id="WP_011494646.1">
    <property type="nucleotide sequence ID" value="NC_007954.1"/>
</dbReference>
<dbReference type="SMR" id="Q12SU7"/>
<dbReference type="STRING" id="318161.Sden_0182"/>
<dbReference type="KEGG" id="sdn:Sden_0182"/>
<dbReference type="eggNOG" id="COG0094">
    <property type="taxonomic scope" value="Bacteria"/>
</dbReference>
<dbReference type="HOGENOM" id="CLU_061015_2_1_6"/>
<dbReference type="OrthoDB" id="9806626at2"/>
<dbReference type="Proteomes" id="UP000001982">
    <property type="component" value="Chromosome"/>
</dbReference>
<dbReference type="GO" id="GO:1990904">
    <property type="term" value="C:ribonucleoprotein complex"/>
    <property type="evidence" value="ECO:0007669"/>
    <property type="project" value="UniProtKB-KW"/>
</dbReference>
<dbReference type="GO" id="GO:0005840">
    <property type="term" value="C:ribosome"/>
    <property type="evidence" value="ECO:0007669"/>
    <property type="project" value="UniProtKB-KW"/>
</dbReference>
<dbReference type="GO" id="GO:0019843">
    <property type="term" value="F:rRNA binding"/>
    <property type="evidence" value="ECO:0007669"/>
    <property type="project" value="UniProtKB-UniRule"/>
</dbReference>
<dbReference type="GO" id="GO:0003735">
    <property type="term" value="F:structural constituent of ribosome"/>
    <property type="evidence" value="ECO:0007669"/>
    <property type="project" value="InterPro"/>
</dbReference>
<dbReference type="GO" id="GO:0000049">
    <property type="term" value="F:tRNA binding"/>
    <property type="evidence" value="ECO:0007669"/>
    <property type="project" value="UniProtKB-UniRule"/>
</dbReference>
<dbReference type="GO" id="GO:0006412">
    <property type="term" value="P:translation"/>
    <property type="evidence" value="ECO:0007669"/>
    <property type="project" value="UniProtKB-UniRule"/>
</dbReference>
<dbReference type="FunFam" id="3.30.1440.10:FF:000001">
    <property type="entry name" value="50S ribosomal protein L5"/>
    <property type="match status" value="1"/>
</dbReference>
<dbReference type="Gene3D" id="3.30.1440.10">
    <property type="match status" value="1"/>
</dbReference>
<dbReference type="HAMAP" id="MF_01333_B">
    <property type="entry name" value="Ribosomal_uL5_B"/>
    <property type="match status" value="1"/>
</dbReference>
<dbReference type="InterPro" id="IPR002132">
    <property type="entry name" value="Ribosomal_uL5"/>
</dbReference>
<dbReference type="InterPro" id="IPR020930">
    <property type="entry name" value="Ribosomal_uL5_bac-type"/>
</dbReference>
<dbReference type="InterPro" id="IPR031309">
    <property type="entry name" value="Ribosomal_uL5_C"/>
</dbReference>
<dbReference type="InterPro" id="IPR020929">
    <property type="entry name" value="Ribosomal_uL5_CS"/>
</dbReference>
<dbReference type="InterPro" id="IPR022803">
    <property type="entry name" value="Ribosomal_uL5_dom_sf"/>
</dbReference>
<dbReference type="InterPro" id="IPR031310">
    <property type="entry name" value="Ribosomal_uL5_N"/>
</dbReference>
<dbReference type="NCBIfam" id="NF000585">
    <property type="entry name" value="PRK00010.1"/>
    <property type="match status" value="1"/>
</dbReference>
<dbReference type="PANTHER" id="PTHR11994">
    <property type="entry name" value="60S RIBOSOMAL PROTEIN L11-RELATED"/>
    <property type="match status" value="1"/>
</dbReference>
<dbReference type="Pfam" id="PF00281">
    <property type="entry name" value="Ribosomal_L5"/>
    <property type="match status" value="1"/>
</dbReference>
<dbReference type="Pfam" id="PF00673">
    <property type="entry name" value="Ribosomal_L5_C"/>
    <property type="match status" value="1"/>
</dbReference>
<dbReference type="PIRSF" id="PIRSF002161">
    <property type="entry name" value="Ribosomal_L5"/>
    <property type="match status" value="1"/>
</dbReference>
<dbReference type="SUPFAM" id="SSF55282">
    <property type="entry name" value="RL5-like"/>
    <property type="match status" value="1"/>
</dbReference>
<dbReference type="PROSITE" id="PS00358">
    <property type="entry name" value="RIBOSOMAL_L5"/>
    <property type="match status" value="1"/>
</dbReference>
<proteinExistence type="inferred from homology"/>
<evidence type="ECO:0000255" key="1">
    <source>
        <dbReference type="HAMAP-Rule" id="MF_01333"/>
    </source>
</evidence>
<evidence type="ECO:0000305" key="2"/>